<protein>
    <recommendedName>
        <fullName evidence="1">Dihydroorotase</fullName>
        <shortName evidence="1">DHOase</shortName>
        <ecNumber evidence="1">3.5.2.3</ecNumber>
    </recommendedName>
</protein>
<sequence>MAMWLKNGMSFNENGQLVRTHIKIEHGNIAAIHHEQLFEANGEDVIDVGGKLIAPGLIDVHVHLREPGGEAKETIETGTLAAAKGGFTTVAAMPNTNPVPDRKEQMEWLARRIQETAHVRVLPYASITLGQKGEELTDFAALKEAGAFAFTDDGVGVQSAGMMFEAMKRAAALDMAIVAHCEDDTLKNGGAVHDGDFARRYGIAGIPSVCEAVHIARDVLLAEATGCHYHVCHISTKESVRVVRDAKRAGICVTAEVTPHHLLLCDEDIPRLDANYKMNPPLRSRADREALIEGLLDGTIDFIATDHAPHTAAEKAKGMEAAPFGIVGLETAFPLLYTHFVKKNVFTLKQLVDWLTIKPAQCFGLQTGRLEVGAPADITVIDLETEEPIDPETFASKGNNTPFAGWRCQGWPVMTFVGGTLVWEKGRA</sequence>
<comment type="function">
    <text evidence="1">Catalyzes the reversible cyclization of carbamoyl aspartate to dihydroorotate.</text>
</comment>
<comment type="catalytic activity">
    <reaction evidence="1">
        <text>(S)-dihydroorotate + H2O = N-carbamoyl-L-aspartate + H(+)</text>
        <dbReference type="Rhea" id="RHEA:24296"/>
        <dbReference type="ChEBI" id="CHEBI:15377"/>
        <dbReference type="ChEBI" id="CHEBI:15378"/>
        <dbReference type="ChEBI" id="CHEBI:30864"/>
        <dbReference type="ChEBI" id="CHEBI:32814"/>
        <dbReference type="EC" id="3.5.2.3"/>
    </reaction>
</comment>
<comment type="cofactor">
    <cofactor evidence="1">
        <name>Zn(2+)</name>
        <dbReference type="ChEBI" id="CHEBI:29105"/>
    </cofactor>
    <text evidence="1">Binds 2 Zn(2+) ions per subunit.</text>
</comment>
<comment type="pathway">
    <text evidence="1">Pyrimidine metabolism; UMP biosynthesis via de novo pathway; (S)-dihydroorotate from bicarbonate: step 3/3.</text>
</comment>
<comment type="similarity">
    <text evidence="1">Belongs to the metallo-dependent hydrolases superfamily. DHOase family. Class I DHOase subfamily.</text>
</comment>
<organism>
    <name type="scientific">Geobacillus thermodenitrificans (strain NG80-2)</name>
    <dbReference type="NCBI Taxonomy" id="420246"/>
    <lineage>
        <taxon>Bacteria</taxon>
        <taxon>Bacillati</taxon>
        <taxon>Bacillota</taxon>
        <taxon>Bacilli</taxon>
        <taxon>Bacillales</taxon>
        <taxon>Anoxybacillaceae</taxon>
        <taxon>Geobacillus</taxon>
    </lineage>
</organism>
<evidence type="ECO:0000255" key="1">
    <source>
        <dbReference type="HAMAP-Rule" id="MF_00220"/>
    </source>
</evidence>
<feature type="chain" id="PRO_1000024085" description="Dihydroorotase">
    <location>
        <begin position="1"/>
        <end position="428"/>
    </location>
</feature>
<feature type="active site" evidence="1">
    <location>
        <position position="306"/>
    </location>
</feature>
<feature type="binding site" evidence="1">
    <location>
        <position position="61"/>
    </location>
    <ligand>
        <name>Zn(2+)</name>
        <dbReference type="ChEBI" id="CHEBI:29105"/>
        <label>1</label>
    </ligand>
</feature>
<feature type="binding site" evidence="1">
    <location>
        <begin position="63"/>
        <end position="65"/>
    </location>
    <ligand>
        <name>substrate</name>
    </ligand>
</feature>
<feature type="binding site" evidence="1">
    <location>
        <position position="63"/>
    </location>
    <ligand>
        <name>Zn(2+)</name>
        <dbReference type="ChEBI" id="CHEBI:29105"/>
        <label>1</label>
    </ligand>
</feature>
<feature type="binding site" evidence="1">
    <location>
        <position position="95"/>
    </location>
    <ligand>
        <name>substrate</name>
    </ligand>
</feature>
<feature type="binding site" evidence="1">
    <location>
        <position position="153"/>
    </location>
    <ligand>
        <name>Zn(2+)</name>
        <dbReference type="ChEBI" id="CHEBI:29105"/>
        <label>1</label>
    </ligand>
</feature>
<feature type="binding site" evidence="1">
    <location>
        <position position="153"/>
    </location>
    <ligand>
        <name>Zn(2+)</name>
        <dbReference type="ChEBI" id="CHEBI:29105"/>
        <label>2</label>
    </ligand>
</feature>
<feature type="binding site" evidence="1">
    <location>
        <position position="180"/>
    </location>
    <ligand>
        <name>Zn(2+)</name>
        <dbReference type="ChEBI" id="CHEBI:29105"/>
        <label>2</label>
    </ligand>
</feature>
<feature type="binding site" evidence="1">
    <location>
        <position position="233"/>
    </location>
    <ligand>
        <name>Zn(2+)</name>
        <dbReference type="ChEBI" id="CHEBI:29105"/>
        <label>2</label>
    </ligand>
</feature>
<feature type="binding site" evidence="1">
    <location>
        <position position="279"/>
    </location>
    <ligand>
        <name>substrate</name>
    </ligand>
</feature>
<feature type="binding site" evidence="1">
    <location>
        <position position="306"/>
    </location>
    <ligand>
        <name>Zn(2+)</name>
        <dbReference type="ChEBI" id="CHEBI:29105"/>
        <label>1</label>
    </ligand>
</feature>
<feature type="binding site" evidence="1">
    <location>
        <position position="310"/>
    </location>
    <ligand>
        <name>substrate</name>
    </ligand>
</feature>
<feature type="binding site" evidence="1">
    <location>
        <begin position="324"/>
        <end position="325"/>
    </location>
    <ligand>
        <name>substrate</name>
    </ligand>
</feature>
<proteinExistence type="inferred from homology"/>
<dbReference type="EC" id="3.5.2.3" evidence="1"/>
<dbReference type="EMBL" id="CP000557">
    <property type="protein sequence ID" value="ABO66385.1"/>
    <property type="molecule type" value="Genomic_DNA"/>
</dbReference>
<dbReference type="RefSeq" id="WP_008878658.1">
    <property type="nucleotide sequence ID" value="NC_009328.1"/>
</dbReference>
<dbReference type="SMR" id="A4IM31"/>
<dbReference type="KEGG" id="gtn:GTNG_1007"/>
<dbReference type="eggNOG" id="COG0044">
    <property type="taxonomic scope" value="Bacteria"/>
</dbReference>
<dbReference type="HOGENOM" id="CLU_015572_1_0_9"/>
<dbReference type="UniPathway" id="UPA00070">
    <property type="reaction ID" value="UER00117"/>
</dbReference>
<dbReference type="Proteomes" id="UP000001578">
    <property type="component" value="Chromosome"/>
</dbReference>
<dbReference type="GO" id="GO:0005737">
    <property type="term" value="C:cytoplasm"/>
    <property type="evidence" value="ECO:0007669"/>
    <property type="project" value="TreeGrafter"/>
</dbReference>
<dbReference type="GO" id="GO:0004038">
    <property type="term" value="F:allantoinase activity"/>
    <property type="evidence" value="ECO:0007669"/>
    <property type="project" value="TreeGrafter"/>
</dbReference>
<dbReference type="GO" id="GO:0004151">
    <property type="term" value="F:dihydroorotase activity"/>
    <property type="evidence" value="ECO:0007669"/>
    <property type="project" value="UniProtKB-UniRule"/>
</dbReference>
<dbReference type="GO" id="GO:0008270">
    <property type="term" value="F:zinc ion binding"/>
    <property type="evidence" value="ECO:0007669"/>
    <property type="project" value="UniProtKB-UniRule"/>
</dbReference>
<dbReference type="GO" id="GO:0044205">
    <property type="term" value="P:'de novo' UMP biosynthetic process"/>
    <property type="evidence" value="ECO:0007669"/>
    <property type="project" value="UniProtKB-UniRule"/>
</dbReference>
<dbReference type="GO" id="GO:0006145">
    <property type="term" value="P:purine nucleobase catabolic process"/>
    <property type="evidence" value="ECO:0007669"/>
    <property type="project" value="TreeGrafter"/>
</dbReference>
<dbReference type="CDD" id="cd01317">
    <property type="entry name" value="DHOase_IIa"/>
    <property type="match status" value="1"/>
</dbReference>
<dbReference type="Gene3D" id="3.20.20.140">
    <property type="entry name" value="Metal-dependent hydrolases"/>
    <property type="match status" value="1"/>
</dbReference>
<dbReference type="Gene3D" id="2.30.40.10">
    <property type="entry name" value="Urease, subunit C, domain 1"/>
    <property type="match status" value="1"/>
</dbReference>
<dbReference type="HAMAP" id="MF_00220_B">
    <property type="entry name" value="PyrC_classI_B"/>
    <property type="match status" value="1"/>
</dbReference>
<dbReference type="InterPro" id="IPR006680">
    <property type="entry name" value="Amidohydro-rel"/>
</dbReference>
<dbReference type="InterPro" id="IPR004722">
    <property type="entry name" value="DHOase"/>
</dbReference>
<dbReference type="InterPro" id="IPR050138">
    <property type="entry name" value="DHOase/Allantoinase_Hydrolase"/>
</dbReference>
<dbReference type="InterPro" id="IPR002195">
    <property type="entry name" value="Dihydroorotase_CS"/>
</dbReference>
<dbReference type="InterPro" id="IPR011059">
    <property type="entry name" value="Metal-dep_hydrolase_composite"/>
</dbReference>
<dbReference type="InterPro" id="IPR032466">
    <property type="entry name" value="Metal_Hydrolase"/>
</dbReference>
<dbReference type="NCBIfam" id="NF006837">
    <property type="entry name" value="PRK09357.1-2"/>
    <property type="match status" value="1"/>
</dbReference>
<dbReference type="NCBIfam" id="TIGR00857">
    <property type="entry name" value="pyrC_multi"/>
    <property type="match status" value="1"/>
</dbReference>
<dbReference type="PANTHER" id="PTHR43668">
    <property type="entry name" value="ALLANTOINASE"/>
    <property type="match status" value="1"/>
</dbReference>
<dbReference type="PANTHER" id="PTHR43668:SF2">
    <property type="entry name" value="ALLANTOINASE"/>
    <property type="match status" value="1"/>
</dbReference>
<dbReference type="Pfam" id="PF01979">
    <property type="entry name" value="Amidohydro_1"/>
    <property type="match status" value="1"/>
</dbReference>
<dbReference type="SUPFAM" id="SSF51338">
    <property type="entry name" value="Composite domain of metallo-dependent hydrolases"/>
    <property type="match status" value="1"/>
</dbReference>
<dbReference type="SUPFAM" id="SSF51556">
    <property type="entry name" value="Metallo-dependent hydrolases"/>
    <property type="match status" value="1"/>
</dbReference>
<dbReference type="PROSITE" id="PS00482">
    <property type="entry name" value="DIHYDROOROTASE_1"/>
    <property type="match status" value="1"/>
</dbReference>
<dbReference type="PROSITE" id="PS00483">
    <property type="entry name" value="DIHYDROOROTASE_2"/>
    <property type="match status" value="1"/>
</dbReference>
<name>PYRC_GEOTN</name>
<keyword id="KW-0378">Hydrolase</keyword>
<keyword id="KW-0479">Metal-binding</keyword>
<keyword id="KW-0665">Pyrimidine biosynthesis</keyword>
<keyword id="KW-0862">Zinc</keyword>
<reference key="1">
    <citation type="journal article" date="2007" name="Proc. Natl. Acad. Sci. U.S.A.">
        <title>Genome and proteome of long-chain alkane degrading Geobacillus thermodenitrificans NG80-2 isolated from a deep-subsurface oil reservoir.</title>
        <authorList>
            <person name="Feng L."/>
            <person name="Wang W."/>
            <person name="Cheng J."/>
            <person name="Ren Y."/>
            <person name="Zhao G."/>
            <person name="Gao C."/>
            <person name="Tang Y."/>
            <person name="Liu X."/>
            <person name="Han W."/>
            <person name="Peng X."/>
            <person name="Liu R."/>
            <person name="Wang L."/>
        </authorList>
    </citation>
    <scope>NUCLEOTIDE SEQUENCE [LARGE SCALE GENOMIC DNA]</scope>
    <source>
        <strain>NG80-2</strain>
    </source>
</reference>
<gene>
    <name evidence="1" type="primary">pyrC</name>
    <name type="ordered locus">GTNG_1007</name>
</gene>
<accession>A4IM31</accession>